<accession>Q9FWW5</accession>
<feature type="chain" id="PRO_0000414066" description="WEB family protein At1g12150">
    <location>
        <begin position="1"/>
        <end position="548"/>
    </location>
</feature>
<feature type="region of interest" description="Disordered" evidence="2">
    <location>
        <begin position="430"/>
        <end position="455"/>
    </location>
</feature>
<feature type="coiled-coil region" evidence="1">
    <location>
        <begin position="71"/>
        <end position="544"/>
    </location>
</feature>
<feature type="compositionally biased region" description="Basic and acidic residues" evidence="2">
    <location>
        <begin position="430"/>
        <end position="448"/>
    </location>
</feature>
<evidence type="ECO:0000255" key="1"/>
<evidence type="ECO:0000256" key="2">
    <source>
        <dbReference type="SAM" id="MobiDB-lite"/>
    </source>
</evidence>
<evidence type="ECO:0000305" key="3"/>
<protein>
    <recommendedName>
        <fullName>WEB family protein At1g12150</fullName>
    </recommendedName>
</protein>
<dbReference type="EMBL" id="AC022522">
    <property type="protein sequence ID" value="AAG12578.1"/>
    <property type="molecule type" value="Genomic_DNA"/>
</dbReference>
<dbReference type="EMBL" id="CP002684">
    <property type="protein sequence ID" value="AEE28843.1"/>
    <property type="molecule type" value="Genomic_DNA"/>
</dbReference>
<dbReference type="EMBL" id="CP002684">
    <property type="protein sequence ID" value="ANM59073.1"/>
    <property type="molecule type" value="Genomic_DNA"/>
</dbReference>
<dbReference type="PIR" id="E86256">
    <property type="entry name" value="E86256"/>
</dbReference>
<dbReference type="RefSeq" id="NP_001321466.1">
    <property type="nucleotide sequence ID" value="NM_001332019.1"/>
</dbReference>
<dbReference type="RefSeq" id="NP_172679.1">
    <property type="nucleotide sequence ID" value="NM_101087.3"/>
</dbReference>
<dbReference type="SMR" id="Q9FWW5"/>
<dbReference type="FunCoup" id="Q9FWW5">
    <property type="interactions" value="173"/>
</dbReference>
<dbReference type="STRING" id="3702.Q9FWW5"/>
<dbReference type="iPTMnet" id="Q9FWW5"/>
<dbReference type="PaxDb" id="3702-AT1G12150.1"/>
<dbReference type="ProteomicsDB" id="243097"/>
<dbReference type="EnsemblPlants" id="AT1G12150.1">
    <property type="protein sequence ID" value="AT1G12150.1"/>
    <property type="gene ID" value="AT1G12150"/>
</dbReference>
<dbReference type="EnsemblPlants" id="AT1G12150.2">
    <property type="protein sequence ID" value="AT1G12150.2"/>
    <property type="gene ID" value="AT1G12150"/>
</dbReference>
<dbReference type="GeneID" id="837767"/>
<dbReference type="Gramene" id="AT1G12150.1">
    <property type="protein sequence ID" value="AT1G12150.1"/>
    <property type="gene ID" value="AT1G12150"/>
</dbReference>
<dbReference type="Gramene" id="AT1G12150.2">
    <property type="protein sequence ID" value="AT1G12150.2"/>
    <property type="gene ID" value="AT1G12150"/>
</dbReference>
<dbReference type="KEGG" id="ath:AT1G12150"/>
<dbReference type="Araport" id="AT1G12150"/>
<dbReference type="TAIR" id="AT1G12150"/>
<dbReference type="eggNOG" id="ENOG502QV0R">
    <property type="taxonomic scope" value="Eukaryota"/>
</dbReference>
<dbReference type="HOGENOM" id="CLU_027385_0_0_1"/>
<dbReference type="InParanoid" id="Q9FWW5"/>
<dbReference type="OMA" id="AHRTNAD"/>
<dbReference type="OrthoDB" id="1933125at2759"/>
<dbReference type="PhylomeDB" id="Q9FWW5"/>
<dbReference type="PRO" id="PR:Q9FWW5"/>
<dbReference type="Proteomes" id="UP000006548">
    <property type="component" value="Chromosome 1"/>
</dbReference>
<dbReference type="ExpressionAtlas" id="Q9FWW5">
    <property type="expression patterns" value="baseline and differential"/>
</dbReference>
<dbReference type="InterPro" id="IPR008545">
    <property type="entry name" value="Web"/>
</dbReference>
<dbReference type="PANTHER" id="PTHR32054">
    <property type="entry name" value="HEAVY CHAIN, PUTATIVE, EXPRESSED-RELATED-RELATED"/>
    <property type="match status" value="1"/>
</dbReference>
<dbReference type="PANTHER" id="PTHR32054:SF42">
    <property type="entry name" value="WEB FAMILY PROTEIN"/>
    <property type="match status" value="1"/>
</dbReference>
<dbReference type="Pfam" id="PF05701">
    <property type="entry name" value="WEMBL"/>
    <property type="match status" value="1"/>
</dbReference>
<sequence>MVNIRVQKAPESPRTMEVGEIDTRAPFQSVKAAVSLFGEVAVSKQRSTPRRSRLSSESVCDKETQLMLVHKEFMKIKQKLDNAESTRSRALDDLSKAKKTMEDLSNKLETVNKSKQSAIDTKETVQQREEQLEHDKCHGSPPHHHELDVAREQYISTTVELDAAKQQLNKIRQSFDSAMDFKATALNQAAEAQRALQVNSAKVNELSKEISDMKDAIHQLKLAAAQNLQEHANIVKEKDDLRECYRTAVEEAEKKLLVLRKEYEPELSRTLEAKLLETTSEIEVLREEMKKAHESEMNTVKIITNELNEATMRLQEAADDECSLRSLVNSLRMELEDLRREREELQQKEAERLEIEETKKLEALKQESLKLEQMKTEAIEARNEAANMNRKIESLKKETEAAMIAAEEAEKRLELVIREVEEAKSAEEKVREEMKMISQKQESKKQDEESSGSKIKITIQEFESLKRGAGETEAAIEKKLATIAAELEEINKRRAEADNKLEANLKAIEEMKQATELAQKSAESAEAAKRMVESELQRWRQQENVQLA</sequence>
<name>Y1215_ARATH</name>
<gene>
    <name type="ordered locus">At1g12150</name>
    <name type="ORF">T28K15.11</name>
</gene>
<reference key="1">
    <citation type="journal article" date="2000" name="Nature">
        <title>Sequence and analysis of chromosome 1 of the plant Arabidopsis thaliana.</title>
        <authorList>
            <person name="Theologis A."/>
            <person name="Ecker J.R."/>
            <person name="Palm C.J."/>
            <person name="Federspiel N.A."/>
            <person name="Kaul S."/>
            <person name="White O."/>
            <person name="Alonso J."/>
            <person name="Altafi H."/>
            <person name="Araujo R."/>
            <person name="Bowman C.L."/>
            <person name="Brooks S.Y."/>
            <person name="Buehler E."/>
            <person name="Chan A."/>
            <person name="Chao Q."/>
            <person name="Chen H."/>
            <person name="Cheuk R.F."/>
            <person name="Chin C.W."/>
            <person name="Chung M.K."/>
            <person name="Conn L."/>
            <person name="Conway A.B."/>
            <person name="Conway A.R."/>
            <person name="Creasy T.H."/>
            <person name="Dewar K."/>
            <person name="Dunn P."/>
            <person name="Etgu P."/>
            <person name="Feldblyum T.V."/>
            <person name="Feng J.-D."/>
            <person name="Fong B."/>
            <person name="Fujii C.Y."/>
            <person name="Gill J.E."/>
            <person name="Goldsmith A.D."/>
            <person name="Haas B."/>
            <person name="Hansen N.F."/>
            <person name="Hughes B."/>
            <person name="Huizar L."/>
            <person name="Hunter J.L."/>
            <person name="Jenkins J."/>
            <person name="Johnson-Hopson C."/>
            <person name="Khan S."/>
            <person name="Khaykin E."/>
            <person name="Kim C.J."/>
            <person name="Koo H.L."/>
            <person name="Kremenetskaia I."/>
            <person name="Kurtz D.B."/>
            <person name="Kwan A."/>
            <person name="Lam B."/>
            <person name="Langin-Hooper S."/>
            <person name="Lee A."/>
            <person name="Lee J.M."/>
            <person name="Lenz C.A."/>
            <person name="Li J.H."/>
            <person name="Li Y.-P."/>
            <person name="Lin X."/>
            <person name="Liu S.X."/>
            <person name="Liu Z.A."/>
            <person name="Luros J.S."/>
            <person name="Maiti R."/>
            <person name="Marziali A."/>
            <person name="Militscher J."/>
            <person name="Miranda M."/>
            <person name="Nguyen M."/>
            <person name="Nierman W.C."/>
            <person name="Osborne B.I."/>
            <person name="Pai G."/>
            <person name="Peterson J."/>
            <person name="Pham P.K."/>
            <person name="Rizzo M."/>
            <person name="Rooney T."/>
            <person name="Rowley D."/>
            <person name="Sakano H."/>
            <person name="Salzberg S.L."/>
            <person name="Schwartz J.R."/>
            <person name="Shinn P."/>
            <person name="Southwick A.M."/>
            <person name="Sun H."/>
            <person name="Tallon L.J."/>
            <person name="Tambunga G."/>
            <person name="Toriumi M.J."/>
            <person name="Town C.D."/>
            <person name="Utterback T."/>
            <person name="Van Aken S."/>
            <person name="Vaysberg M."/>
            <person name="Vysotskaia V.S."/>
            <person name="Walker M."/>
            <person name="Wu D."/>
            <person name="Yu G."/>
            <person name="Fraser C.M."/>
            <person name="Venter J.C."/>
            <person name="Davis R.W."/>
        </authorList>
    </citation>
    <scope>NUCLEOTIDE SEQUENCE [LARGE SCALE GENOMIC DNA]</scope>
    <source>
        <strain>cv. Columbia</strain>
    </source>
</reference>
<reference key="2">
    <citation type="journal article" date="2017" name="Plant J.">
        <title>Araport11: a complete reannotation of the Arabidopsis thaliana reference genome.</title>
        <authorList>
            <person name="Cheng C.Y."/>
            <person name="Krishnakumar V."/>
            <person name="Chan A.P."/>
            <person name="Thibaud-Nissen F."/>
            <person name="Schobel S."/>
            <person name="Town C.D."/>
        </authorList>
    </citation>
    <scope>GENOME REANNOTATION</scope>
    <source>
        <strain>cv. Columbia</strain>
    </source>
</reference>
<proteinExistence type="evidence at transcript level"/>
<comment type="similarity">
    <text evidence="3">Belongs to the WEB family.</text>
</comment>
<organism>
    <name type="scientific">Arabidopsis thaliana</name>
    <name type="common">Mouse-ear cress</name>
    <dbReference type="NCBI Taxonomy" id="3702"/>
    <lineage>
        <taxon>Eukaryota</taxon>
        <taxon>Viridiplantae</taxon>
        <taxon>Streptophyta</taxon>
        <taxon>Embryophyta</taxon>
        <taxon>Tracheophyta</taxon>
        <taxon>Spermatophyta</taxon>
        <taxon>Magnoliopsida</taxon>
        <taxon>eudicotyledons</taxon>
        <taxon>Gunneridae</taxon>
        <taxon>Pentapetalae</taxon>
        <taxon>rosids</taxon>
        <taxon>malvids</taxon>
        <taxon>Brassicales</taxon>
        <taxon>Brassicaceae</taxon>
        <taxon>Camelineae</taxon>
        <taxon>Arabidopsis</taxon>
    </lineage>
</organism>
<keyword id="KW-0175">Coiled coil</keyword>
<keyword id="KW-1185">Reference proteome</keyword>